<dbReference type="EC" id="2.1.2.1" evidence="1"/>
<dbReference type="EMBL" id="CP000817">
    <property type="protein sequence ID" value="ACA38617.1"/>
    <property type="molecule type" value="Genomic_DNA"/>
</dbReference>
<dbReference type="RefSeq" id="WP_012292760.1">
    <property type="nucleotide sequence ID" value="NC_010382.1"/>
</dbReference>
<dbReference type="SMR" id="B1HM45"/>
<dbReference type="EnsemblBacteria" id="ACA38617">
    <property type="protein sequence ID" value="ACA38617"/>
    <property type="gene ID" value="Bsph_1005"/>
</dbReference>
<dbReference type="KEGG" id="lsp:Bsph_1005"/>
<dbReference type="HOGENOM" id="CLU_022477_2_1_9"/>
<dbReference type="UniPathway" id="UPA00193"/>
<dbReference type="UniPathway" id="UPA00288">
    <property type="reaction ID" value="UER01023"/>
</dbReference>
<dbReference type="Proteomes" id="UP000002164">
    <property type="component" value="Chromosome"/>
</dbReference>
<dbReference type="GO" id="GO:0005829">
    <property type="term" value="C:cytosol"/>
    <property type="evidence" value="ECO:0007669"/>
    <property type="project" value="TreeGrafter"/>
</dbReference>
<dbReference type="GO" id="GO:0004372">
    <property type="term" value="F:glycine hydroxymethyltransferase activity"/>
    <property type="evidence" value="ECO:0007669"/>
    <property type="project" value="UniProtKB-UniRule"/>
</dbReference>
<dbReference type="GO" id="GO:0030170">
    <property type="term" value="F:pyridoxal phosphate binding"/>
    <property type="evidence" value="ECO:0007669"/>
    <property type="project" value="UniProtKB-UniRule"/>
</dbReference>
<dbReference type="GO" id="GO:0019264">
    <property type="term" value="P:glycine biosynthetic process from serine"/>
    <property type="evidence" value="ECO:0007669"/>
    <property type="project" value="UniProtKB-UniRule"/>
</dbReference>
<dbReference type="GO" id="GO:0035999">
    <property type="term" value="P:tetrahydrofolate interconversion"/>
    <property type="evidence" value="ECO:0007669"/>
    <property type="project" value="UniProtKB-UniRule"/>
</dbReference>
<dbReference type="CDD" id="cd00378">
    <property type="entry name" value="SHMT"/>
    <property type="match status" value="1"/>
</dbReference>
<dbReference type="FunFam" id="3.40.640.10:FF:000001">
    <property type="entry name" value="Serine hydroxymethyltransferase"/>
    <property type="match status" value="1"/>
</dbReference>
<dbReference type="FunFam" id="3.90.1150.10:FF:000003">
    <property type="entry name" value="Serine hydroxymethyltransferase"/>
    <property type="match status" value="1"/>
</dbReference>
<dbReference type="Gene3D" id="3.90.1150.10">
    <property type="entry name" value="Aspartate Aminotransferase, domain 1"/>
    <property type="match status" value="1"/>
</dbReference>
<dbReference type="Gene3D" id="3.40.640.10">
    <property type="entry name" value="Type I PLP-dependent aspartate aminotransferase-like (Major domain)"/>
    <property type="match status" value="1"/>
</dbReference>
<dbReference type="HAMAP" id="MF_00051">
    <property type="entry name" value="SHMT"/>
    <property type="match status" value="1"/>
</dbReference>
<dbReference type="InterPro" id="IPR015424">
    <property type="entry name" value="PyrdxlP-dep_Trfase"/>
</dbReference>
<dbReference type="InterPro" id="IPR015421">
    <property type="entry name" value="PyrdxlP-dep_Trfase_major"/>
</dbReference>
<dbReference type="InterPro" id="IPR015422">
    <property type="entry name" value="PyrdxlP-dep_Trfase_small"/>
</dbReference>
<dbReference type="InterPro" id="IPR001085">
    <property type="entry name" value="Ser_HO-MeTrfase"/>
</dbReference>
<dbReference type="InterPro" id="IPR049943">
    <property type="entry name" value="Ser_HO-MeTrfase-like"/>
</dbReference>
<dbReference type="InterPro" id="IPR019798">
    <property type="entry name" value="Ser_HO-MeTrfase_PLP_BS"/>
</dbReference>
<dbReference type="InterPro" id="IPR039429">
    <property type="entry name" value="SHMT-like_dom"/>
</dbReference>
<dbReference type="NCBIfam" id="NF000586">
    <property type="entry name" value="PRK00011.1"/>
    <property type="match status" value="1"/>
</dbReference>
<dbReference type="PANTHER" id="PTHR11680">
    <property type="entry name" value="SERINE HYDROXYMETHYLTRANSFERASE"/>
    <property type="match status" value="1"/>
</dbReference>
<dbReference type="PANTHER" id="PTHR11680:SF35">
    <property type="entry name" value="SERINE HYDROXYMETHYLTRANSFERASE 1"/>
    <property type="match status" value="1"/>
</dbReference>
<dbReference type="Pfam" id="PF00464">
    <property type="entry name" value="SHMT"/>
    <property type="match status" value="1"/>
</dbReference>
<dbReference type="PIRSF" id="PIRSF000412">
    <property type="entry name" value="SHMT"/>
    <property type="match status" value="1"/>
</dbReference>
<dbReference type="SUPFAM" id="SSF53383">
    <property type="entry name" value="PLP-dependent transferases"/>
    <property type="match status" value="1"/>
</dbReference>
<dbReference type="PROSITE" id="PS00096">
    <property type="entry name" value="SHMT"/>
    <property type="match status" value="1"/>
</dbReference>
<name>GLYA_LYSSC</name>
<evidence type="ECO:0000255" key="1">
    <source>
        <dbReference type="HAMAP-Rule" id="MF_00051"/>
    </source>
</evidence>
<keyword id="KW-0028">Amino-acid biosynthesis</keyword>
<keyword id="KW-0963">Cytoplasm</keyword>
<keyword id="KW-0554">One-carbon metabolism</keyword>
<keyword id="KW-0663">Pyridoxal phosphate</keyword>
<keyword id="KW-0808">Transferase</keyword>
<accession>B1HM45</accession>
<feature type="chain" id="PRO_0000369933" description="Serine hydroxymethyltransferase">
    <location>
        <begin position="1"/>
        <end position="413"/>
    </location>
</feature>
<feature type="binding site" evidence="1">
    <location>
        <position position="119"/>
    </location>
    <ligand>
        <name>(6S)-5,6,7,8-tetrahydrofolate</name>
        <dbReference type="ChEBI" id="CHEBI:57453"/>
    </ligand>
</feature>
<feature type="binding site" evidence="1">
    <location>
        <begin position="123"/>
        <end position="125"/>
    </location>
    <ligand>
        <name>(6S)-5,6,7,8-tetrahydrofolate</name>
        <dbReference type="ChEBI" id="CHEBI:57453"/>
    </ligand>
</feature>
<feature type="binding site" evidence="1">
    <location>
        <begin position="351"/>
        <end position="353"/>
    </location>
    <ligand>
        <name>(6S)-5,6,7,8-tetrahydrofolate</name>
        <dbReference type="ChEBI" id="CHEBI:57453"/>
    </ligand>
</feature>
<feature type="site" description="Plays an important role in substrate specificity" evidence="1">
    <location>
        <position position="227"/>
    </location>
</feature>
<feature type="modified residue" description="N6-(pyridoxal phosphate)lysine" evidence="1">
    <location>
        <position position="228"/>
    </location>
</feature>
<sequence>MAYEKLAVQDKAVLEGILAEKKRQQANIELIASENFVSEAVMEAQGSVLTNKYAEGYPGKRYYGGCEHVDVVEDIARDRVKEIFGAEYANVQPHSGAQANMAVYHTILEPGDTVLGMNLSHGGHLTHGSPVNFSGILYNFVEYGVTKDTQVIDYEDVRQKALEHKPKLIVAGASAYPREIDFSKFREIADEVGAYFMVDMAHIAGLVAVGEHQSPVPYADFVTSTTHKTLRGPRGGLILASKEWEQKLNKSVFPGIQGGPLMHVIAAKAVAFGEVLQPEFKDYAKQIKLNAKALAEVLIAEGVEIVSGGTDNHLLLLNVKSLGLTGKVAEHALDEVGITTNKNTIPYDTESPFVTSGIRIGTPAVTSRGFKEEDMKEVGAIIAAVLKNPEDEAVKADAKDRVKALTDKHPLYA</sequence>
<protein>
    <recommendedName>
        <fullName evidence="1">Serine hydroxymethyltransferase</fullName>
        <shortName evidence="1">SHMT</shortName>
        <shortName evidence="1">Serine methylase</shortName>
        <ecNumber evidence="1">2.1.2.1</ecNumber>
    </recommendedName>
</protein>
<proteinExistence type="inferred from homology"/>
<organism>
    <name type="scientific">Lysinibacillus sphaericus (strain C3-41)</name>
    <dbReference type="NCBI Taxonomy" id="444177"/>
    <lineage>
        <taxon>Bacteria</taxon>
        <taxon>Bacillati</taxon>
        <taxon>Bacillota</taxon>
        <taxon>Bacilli</taxon>
        <taxon>Bacillales</taxon>
        <taxon>Bacillaceae</taxon>
        <taxon>Lysinibacillus</taxon>
    </lineage>
</organism>
<reference key="1">
    <citation type="journal article" date="2008" name="J. Bacteriol.">
        <title>Complete genome sequence of the mosquitocidal bacterium Bacillus sphaericus C3-41 and comparison with those of closely related Bacillus species.</title>
        <authorList>
            <person name="Hu X."/>
            <person name="Fan W."/>
            <person name="Han B."/>
            <person name="Liu H."/>
            <person name="Zheng D."/>
            <person name="Li Q."/>
            <person name="Dong W."/>
            <person name="Yan J."/>
            <person name="Gao M."/>
            <person name="Berry C."/>
            <person name="Yuan Z."/>
        </authorList>
    </citation>
    <scope>NUCLEOTIDE SEQUENCE [LARGE SCALE GENOMIC DNA]</scope>
    <source>
        <strain>C3-41</strain>
    </source>
</reference>
<comment type="function">
    <text evidence="1">Catalyzes the reversible interconversion of serine and glycine with tetrahydrofolate (THF) serving as the one-carbon carrier. This reaction serves as the major source of one-carbon groups required for the biosynthesis of purines, thymidylate, methionine, and other important biomolecules. Also exhibits THF-independent aldolase activity toward beta-hydroxyamino acids, producing glycine and aldehydes, via a retro-aldol mechanism.</text>
</comment>
<comment type="catalytic activity">
    <reaction evidence="1">
        <text>(6R)-5,10-methylene-5,6,7,8-tetrahydrofolate + glycine + H2O = (6S)-5,6,7,8-tetrahydrofolate + L-serine</text>
        <dbReference type="Rhea" id="RHEA:15481"/>
        <dbReference type="ChEBI" id="CHEBI:15377"/>
        <dbReference type="ChEBI" id="CHEBI:15636"/>
        <dbReference type="ChEBI" id="CHEBI:33384"/>
        <dbReference type="ChEBI" id="CHEBI:57305"/>
        <dbReference type="ChEBI" id="CHEBI:57453"/>
        <dbReference type="EC" id="2.1.2.1"/>
    </reaction>
</comment>
<comment type="cofactor">
    <cofactor evidence="1">
        <name>pyridoxal 5'-phosphate</name>
        <dbReference type="ChEBI" id="CHEBI:597326"/>
    </cofactor>
</comment>
<comment type="pathway">
    <text evidence="1">One-carbon metabolism; tetrahydrofolate interconversion.</text>
</comment>
<comment type="pathway">
    <text evidence="1">Amino-acid biosynthesis; glycine biosynthesis; glycine from L-serine: step 1/1.</text>
</comment>
<comment type="subunit">
    <text evidence="1">Homodimer.</text>
</comment>
<comment type="subcellular location">
    <subcellularLocation>
        <location evidence="1">Cytoplasm</location>
    </subcellularLocation>
</comment>
<comment type="similarity">
    <text evidence="1">Belongs to the SHMT family.</text>
</comment>
<gene>
    <name evidence="1" type="primary">glyA</name>
    <name type="ordered locus">Bsph_1005</name>
</gene>